<organism>
    <name type="scientific">Ipomoea batatas</name>
    <name type="common">Sweet potato</name>
    <name type="synonym">Convolvulus batatas</name>
    <dbReference type="NCBI Taxonomy" id="4120"/>
    <lineage>
        <taxon>Eukaryota</taxon>
        <taxon>Viridiplantae</taxon>
        <taxon>Streptophyta</taxon>
        <taxon>Embryophyta</taxon>
        <taxon>Tracheophyta</taxon>
        <taxon>Spermatophyta</taxon>
        <taxon>Magnoliopsida</taxon>
        <taxon>eudicotyledons</taxon>
        <taxon>Gunneridae</taxon>
        <taxon>Pentapetalae</taxon>
        <taxon>asterids</taxon>
        <taxon>lamiids</taxon>
        <taxon>Solanales</taxon>
        <taxon>Convolvulaceae</taxon>
        <taxon>Ipomoeeae</taxon>
        <taxon>Ipomoea</taxon>
    </lineage>
</organism>
<name>PERA_IPOBA</name>
<feature type="signal peptide" evidence="1">
    <location>
        <begin position="1"/>
        <end position="20"/>
    </location>
</feature>
<feature type="propeptide" id="PRO_0000023749" evidence="4">
    <location>
        <begin position="21"/>
        <end position="66"/>
    </location>
</feature>
<feature type="chain" id="PRO_0000023750" description="Anionic peroxidase">
    <location>
        <begin position="67"/>
        <end position="364"/>
    </location>
</feature>
<feature type="active site" description="Proton acceptor" evidence="2 3">
    <location>
        <position position="99"/>
    </location>
</feature>
<feature type="binding site" evidence="2">
    <location>
        <position position="100"/>
    </location>
    <ligand>
        <name>Ca(2+)</name>
        <dbReference type="ChEBI" id="CHEBI:29108"/>
        <label>1</label>
    </ligand>
</feature>
<feature type="binding site" evidence="2">
    <location>
        <position position="103"/>
    </location>
    <ligand>
        <name>Ca(2+)</name>
        <dbReference type="ChEBI" id="CHEBI:29108"/>
        <label>1</label>
    </ligand>
</feature>
<feature type="binding site" evidence="2">
    <location>
        <position position="105"/>
    </location>
    <ligand>
        <name>Ca(2+)</name>
        <dbReference type="ChEBI" id="CHEBI:29108"/>
        <label>1</label>
    </ligand>
</feature>
<feature type="binding site" evidence="2">
    <location>
        <position position="107"/>
    </location>
    <ligand>
        <name>Ca(2+)</name>
        <dbReference type="ChEBI" id="CHEBI:29108"/>
        <label>1</label>
    </ligand>
</feature>
<feature type="binding site" description="axial binding residue" evidence="2">
    <location>
        <position position="227"/>
    </location>
    <ligand>
        <name>heme b</name>
        <dbReference type="ChEBI" id="CHEBI:60344"/>
    </ligand>
    <ligandPart>
        <name>Fe</name>
        <dbReference type="ChEBI" id="CHEBI:18248"/>
    </ligandPart>
</feature>
<feature type="binding site" evidence="2">
    <location>
        <position position="228"/>
    </location>
    <ligand>
        <name>Ca(2+)</name>
        <dbReference type="ChEBI" id="CHEBI:29108"/>
        <label>2</label>
    </ligand>
</feature>
<feature type="binding site" evidence="2">
    <location>
        <position position="268"/>
    </location>
    <ligand>
        <name>Ca(2+)</name>
        <dbReference type="ChEBI" id="CHEBI:29108"/>
        <label>2</label>
    </ligand>
</feature>
<feature type="binding site" evidence="2">
    <location>
        <position position="270"/>
    </location>
    <ligand>
        <name>Ca(2+)</name>
        <dbReference type="ChEBI" id="CHEBI:29108"/>
        <label>2</label>
    </ligand>
</feature>
<feature type="binding site" evidence="2">
    <location>
        <position position="275"/>
    </location>
    <ligand>
        <name>Ca(2+)</name>
        <dbReference type="ChEBI" id="CHEBI:29108"/>
        <label>2</label>
    </ligand>
</feature>
<feature type="site" description="Transition state stabilizer" evidence="2">
    <location>
        <position position="95"/>
    </location>
</feature>
<feature type="glycosylation site" description="N-linked (GlcNAc...) asparagine" evidence="1">
    <location>
        <position position="113"/>
    </location>
</feature>
<feature type="glycosylation site" description="N-linked (GlcNAc...) asparagine" evidence="1">
    <location>
        <position position="188"/>
    </location>
</feature>
<feature type="glycosylation site" description="N-linked (GlcNAc...) asparagine" evidence="1">
    <location>
        <position position="202"/>
    </location>
</feature>
<feature type="glycosylation site" description="N-linked (GlcNAc...) asparagine" evidence="1">
    <location>
        <position position="216"/>
    </location>
</feature>
<feature type="glycosylation site" description="N-linked (GlcNAc...) asparagine" evidence="1">
    <location>
        <position position="254"/>
    </location>
</feature>
<feature type="glycosylation site" description="N-linked (GlcNAc...) asparagine" evidence="1">
    <location>
        <position position="260"/>
    </location>
</feature>
<feature type="glycosylation site" description="N-linked (GlcNAc...) asparagine" evidence="1">
    <location>
        <position position="299"/>
    </location>
</feature>
<feature type="disulfide bond" evidence="2">
    <location>
        <begin position="101"/>
        <end position="106"/>
    </location>
</feature>
<feature type="disulfide bond" evidence="2">
    <location>
        <begin position="155"/>
        <end position="343"/>
    </location>
</feature>
<feature type="disulfide bond" evidence="2">
    <location>
        <begin position="234"/>
        <end position="255"/>
    </location>
</feature>
<accession>O04795</accession>
<protein>
    <recommendedName>
        <fullName>Anionic peroxidase</fullName>
        <ecNumber>1.11.1.7</ecNumber>
    </recommendedName>
    <alternativeName>
        <fullName>SwPA1</fullName>
    </alternativeName>
</protein>
<proteinExistence type="evidence at protein level"/>
<reference key="1">
    <citation type="journal article" date="1997" name="Mol. Gen. Genet.">
        <title>Molecular cloning and characterization of cDNAs for anionic and neutral peroxidases from suspension-cultured cells of sweet potato and their differential expression in response to stress.</title>
        <authorList>
            <person name="Huh G.-H."/>
            <person name="Lee S.-J."/>
            <person name="Bae Y.-S."/>
            <person name="Liu J.R."/>
            <person name="Kwak S.-S."/>
        </authorList>
    </citation>
    <scope>NUCLEOTIDE SEQUENCE [MRNA]</scope>
    <scope>CHARACTERIZATION</scope>
    <scope>PROTEIN SEQUENCE OF 67-79</scope>
    <source>
        <strain>cv. White Star</strain>
    </source>
</reference>
<dbReference type="EC" id="1.11.1.7"/>
<dbReference type="EMBL" id="Z84472">
    <property type="protein sequence ID" value="CAB06477.1"/>
    <property type="molecule type" value="mRNA"/>
</dbReference>
<dbReference type="PIR" id="T10945">
    <property type="entry name" value="T10945"/>
</dbReference>
<dbReference type="SMR" id="O04795"/>
<dbReference type="PeroxiBase" id="66">
    <property type="entry name" value="IbPrx01"/>
</dbReference>
<dbReference type="GO" id="GO:0005576">
    <property type="term" value="C:extracellular region"/>
    <property type="evidence" value="ECO:0007669"/>
    <property type="project" value="UniProtKB-SubCell"/>
</dbReference>
<dbReference type="GO" id="GO:0020037">
    <property type="term" value="F:heme binding"/>
    <property type="evidence" value="ECO:0007669"/>
    <property type="project" value="InterPro"/>
</dbReference>
<dbReference type="GO" id="GO:0140825">
    <property type="term" value="F:lactoperoxidase activity"/>
    <property type="evidence" value="ECO:0007669"/>
    <property type="project" value="UniProtKB-EC"/>
</dbReference>
<dbReference type="GO" id="GO:0046872">
    <property type="term" value="F:metal ion binding"/>
    <property type="evidence" value="ECO:0007669"/>
    <property type="project" value="UniProtKB-KW"/>
</dbReference>
<dbReference type="GO" id="GO:0042744">
    <property type="term" value="P:hydrogen peroxide catabolic process"/>
    <property type="evidence" value="ECO:0007669"/>
    <property type="project" value="UniProtKB-KW"/>
</dbReference>
<dbReference type="GO" id="GO:0006979">
    <property type="term" value="P:response to oxidative stress"/>
    <property type="evidence" value="ECO:0007669"/>
    <property type="project" value="InterPro"/>
</dbReference>
<dbReference type="CDD" id="cd00693">
    <property type="entry name" value="secretory_peroxidase"/>
    <property type="match status" value="1"/>
</dbReference>
<dbReference type="Gene3D" id="1.10.520.10">
    <property type="match status" value="1"/>
</dbReference>
<dbReference type="Gene3D" id="1.10.420.10">
    <property type="entry name" value="Peroxidase, domain 2"/>
    <property type="match status" value="1"/>
</dbReference>
<dbReference type="InterPro" id="IPR002016">
    <property type="entry name" value="Haem_peroxidase"/>
</dbReference>
<dbReference type="InterPro" id="IPR010255">
    <property type="entry name" value="Haem_peroxidase_sf"/>
</dbReference>
<dbReference type="InterPro" id="IPR000823">
    <property type="entry name" value="Peroxidase_pln"/>
</dbReference>
<dbReference type="InterPro" id="IPR019794">
    <property type="entry name" value="Peroxidases_AS"/>
</dbReference>
<dbReference type="InterPro" id="IPR019793">
    <property type="entry name" value="Peroxidases_heam-ligand_BS"/>
</dbReference>
<dbReference type="InterPro" id="IPR033905">
    <property type="entry name" value="Secretory_peroxidase"/>
</dbReference>
<dbReference type="PANTHER" id="PTHR31388:SF264">
    <property type="entry name" value="PEROXIDASE 59"/>
    <property type="match status" value="1"/>
</dbReference>
<dbReference type="PANTHER" id="PTHR31388">
    <property type="entry name" value="PEROXIDASE 72-RELATED"/>
    <property type="match status" value="1"/>
</dbReference>
<dbReference type="Pfam" id="PF00141">
    <property type="entry name" value="peroxidase"/>
    <property type="match status" value="1"/>
</dbReference>
<dbReference type="PRINTS" id="PR00458">
    <property type="entry name" value="PEROXIDASE"/>
</dbReference>
<dbReference type="PRINTS" id="PR00461">
    <property type="entry name" value="PLPEROXIDASE"/>
</dbReference>
<dbReference type="SUPFAM" id="SSF48113">
    <property type="entry name" value="Heme-dependent peroxidases"/>
    <property type="match status" value="1"/>
</dbReference>
<dbReference type="PROSITE" id="PS00435">
    <property type="entry name" value="PEROXIDASE_1"/>
    <property type="match status" value="1"/>
</dbReference>
<dbReference type="PROSITE" id="PS00436">
    <property type="entry name" value="PEROXIDASE_2"/>
    <property type="match status" value="1"/>
</dbReference>
<dbReference type="PROSITE" id="PS50873">
    <property type="entry name" value="PEROXIDASE_4"/>
    <property type="match status" value="1"/>
</dbReference>
<evidence type="ECO:0000255" key="1"/>
<evidence type="ECO:0000255" key="2">
    <source>
        <dbReference type="PROSITE-ProRule" id="PRU00297"/>
    </source>
</evidence>
<evidence type="ECO:0000255" key="3">
    <source>
        <dbReference type="PROSITE-ProRule" id="PRU10012"/>
    </source>
</evidence>
<evidence type="ECO:0000269" key="4">
    <source>
    </source>
</evidence>
<evidence type="ECO:0000305" key="5"/>
<comment type="function">
    <text>Removal of H(2)O(2), oxidation of toxic reductants, biosynthesis and degradation of lignin, suberization, auxin catabolism, response to environmental stresses such as wounding, pathogen attack and oxidative stress. These functions might be dependent on each isozyme/isoform in each plant tissue.</text>
</comment>
<comment type="function">
    <text>May contribute to protection against cold-induced oxidative stress.</text>
</comment>
<comment type="catalytic activity">
    <reaction>
        <text>2 a phenolic donor + H2O2 = 2 a phenolic radical donor + 2 H2O</text>
        <dbReference type="Rhea" id="RHEA:56136"/>
        <dbReference type="ChEBI" id="CHEBI:15377"/>
        <dbReference type="ChEBI" id="CHEBI:16240"/>
        <dbReference type="ChEBI" id="CHEBI:139520"/>
        <dbReference type="ChEBI" id="CHEBI:139521"/>
        <dbReference type="EC" id="1.11.1.7"/>
    </reaction>
</comment>
<comment type="cofactor">
    <cofactor>
        <name>Ca(2+)</name>
        <dbReference type="ChEBI" id="CHEBI:29108"/>
    </cofactor>
    <text>Binds 2 calcium ions per subunit.</text>
</comment>
<comment type="cofactor">
    <cofactor>
        <name>heme b</name>
        <dbReference type="ChEBI" id="CHEBI:60344"/>
    </cofactor>
    <text>Binds 1 heme b (iron(II)-protoporphyrin IX) group per subunit.</text>
</comment>
<comment type="subcellular location">
    <subcellularLocation>
        <location evidence="2">Secreted</location>
    </subcellularLocation>
</comment>
<comment type="tissue specificity">
    <text>Highly expressed in suspension cultured cells and calli. Weak expression also found in the stems of intact plants. No expression in leaf, tuberous root and non-tuberous root.</text>
</comment>
<comment type="developmental stage">
    <text>Highly expressed 0.5 days after subculture (DAS). No expression was detected at 5 DAS and then expression was highly induced between 11-20 DAS.</text>
</comment>
<comment type="induction">
    <text>By wounding and cold stress. Weakly induced by acclimation and strongly induced by chilling treatment.</text>
</comment>
<comment type="similarity">
    <text evidence="2">Belongs to the peroxidase family. Classical plant (class III) peroxidase subfamily.</text>
</comment>
<comment type="caution">
    <text evidence="5">Lacks one of the disulfide bridges highly conserved in the class III peroxidase family.</text>
</comment>
<keyword id="KW-0106">Calcium</keyword>
<keyword id="KW-0903">Direct protein sequencing</keyword>
<keyword id="KW-1015">Disulfide bond</keyword>
<keyword id="KW-0325">Glycoprotein</keyword>
<keyword id="KW-0349">Heme</keyword>
<keyword id="KW-0376">Hydrogen peroxide</keyword>
<keyword id="KW-0408">Iron</keyword>
<keyword id="KW-0479">Metal-binding</keyword>
<keyword id="KW-0560">Oxidoreductase</keyword>
<keyword id="KW-0575">Peroxidase</keyword>
<keyword id="KW-0964">Secreted</keyword>
<keyword id="KW-0732">Signal</keyword>
<sequence length="364" mass="38693">MASFMKQLSLVLSFIALALAGCAVYQNTQTAMKDQLKVTPTWLDNTLKSTNLLSLGLGKPSGGKLGDEACVFSAVKEVVVAAINAEARMGASLIRLFFHDCFVDGCDAGLLLNDTATFTGEQTAAGNNNSVRGFAVIEQAKQNVKTQMPDMSVSCADILSIAARDSFEKFSGSTYTVTLGRKDARTANFTGANTQLVGPNENLTSQLTKFAAKGFNGTEMVALLGSHTIGFARCPLLCISTFINPARVSTLNCNCSGTVNATGLVGLDPTPTTWDQRYFSDVVNDQGLLFSDNELLKGNTTNAAVRRYRDAMGAFLTDFAAAMVKMSNLPPSPGVALEIRDVCSRVNANSVDPCEESRLLASPD</sequence>